<comment type="function">
    <text evidence="1">Acts as a sulfur carrier required for 2-thiolation of mcm(5)S(2)U at tRNA wobble positions of cytosolic tRNA(Lys), tRNA(Glu) and tRNA(Gln). Serves as sulfur donor in tRNA 2-thiolation reaction by being thiocarboxylated (-COSH) at its C-terminus by the MOCS3 homolog UBA4. The sulfur is then transferred to tRNA to form 2-thiolation of mcm(5)S(2)U. Prior mcm(5) tRNA modification by the elongator complex is required for 2-thiolation. Also acts as a ubiquitin-like protein (UBL) that is covalently conjugated via an isopeptide bond to lysine residues of target proteins such as AHP1. The thiocarboxylated form serves as substrate for conjugation and oxidative stress specifically induces the formation of UBL-protein conjugates.</text>
</comment>
<comment type="pathway">
    <text evidence="1">tRNA modification; 5-methoxycarbonylmethyl-2-thiouridine-tRNA biosynthesis.</text>
</comment>
<comment type="subunit">
    <text evidence="1">Homodimer; homodimerization may provide an autoprotection to the highly active C-terminal residue before attacking its substrates. Interacts with NCS2 and NCS6. Forms a conjugate with the target protein AHP1.</text>
</comment>
<comment type="subcellular location">
    <subcellularLocation>
        <location evidence="1">Cytoplasm</location>
    </subcellularLocation>
    <subcellularLocation>
        <location evidence="1">Nucleus</location>
    </subcellularLocation>
</comment>
<comment type="PTM">
    <text evidence="1">C-terminal thiocarboxylation occurs in 2 steps, it is first acyl-adenylated (-COAMP) via the hesA/moeB/thiF part of UBA4, then thiocarboxylated (-COSH) via the rhodanese domain of UBA4.</text>
</comment>
<comment type="similarity">
    <text evidence="1">Belongs to the URM1 family.</text>
</comment>
<protein>
    <recommendedName>
        <fullName evidence="1">Ubiquitin-related modifier 1</fullName>
    </recommendedName>
</protein>
<reference key="1">
    <citation type="submission" date="2005-03" db="EMBL/GenBank/DDBJ databases">
        <title>Annotation of the Saccharomyces cerevisiae RM11-1a genome.</title>
        <authorList>
            <consortium name="The Broad Institute Genome Sequencing Platform"/>
            <person name="Birren B.W."/>
            <person name="Lander E.S."/>
            <person name="Galagan J.E."/>
            <person name="Nusbaum C."/>
            <person name="Devon K."/>
            <person name="Cuomo C."/>
            <person name="Jaffe D.B."/>
            <person name="Butler J."/>
            <person name="Alvarez P."/>
            <person name="Gnerre S."/>
            <person name="Grabherr M."/>
            <person name="Kleber M."/>
            <person name="Mauceli E.W."/>
            <person name="Brockman W."/>
            <person name="MacCallum I.A."/>
            <person name="Rounsley S."/>
            <person name="Young S.K."/>
            <person name="LaButti K."/>
            <person name="Pushparaj V."/>
            <person name="DeCaprio D."/>
            <person name="Crawford M."/>
            <person name="Koehrsen M."/>
            <person name="Engels R."/>
            <person name="Montgomery P."/>
            <person name="Pearson M."/>
            <person name="Howarth C."/>
            <person name="Larson L."/>
            <person name="Luoma S."/>
            <person name="White J."/>
            <person name="O'Leary S."/>
            <person name="Kodira C.D."/>
            <person name="Zeng Q."/>
            <person name="Yandava C."/>
            <person name="Alvarado L."/>
            <person name="Pratt S."/>
            <person name="Kruglyak L."/>
        </authorList>
    </citation>
    <scope>NUCLEOTIDE SEQUENCE [LARGE SCALE GENOMIC DNA]</scope>
    <source>
        <strain>RM11-1a</strain>
    </source>
</reference>
<accession>B3LTL7</accession>
<sequence>MVNVKVEFLGGLDAIFGKQRVHKIKMDKEDPVTVGDLIDHIVSTMINNPNDVSIFIEDDSIRPGIITLINDTDWELEGEKDYILEDGDIISFTSTLHGG</sequence>
<evidence type="ECO:0000255" key="1">
    <source>
        <dbReference type="HAMAP-Rule" id="MF_03048"/>
    </source>
</evidence>
<name>URM1_YEAS1</name>
<keyword id="KW-0963">Cytoplasm</keyword>
<keyword id="KW-1017">Isopeptide bond</keyword>
<keyword id="KW-0539">Nucleus</keyword>
<keyword id="KW-0819">tRNA processing</keyword>
<keyword id="KW-0833">Ubl conjugation pathway</keyword>
<proteinExistence type="inferred from homology"/>
<organism>
    <name type="scientific">Saccharomyces cerevisiae (strain RM11-1a)</name>
    <name type="common">Baker's yeast</name>
    <dbReference type="NCBI Taxonomy" id="285006"/>
    <lineage>
        <taxon>Eukaryota</taxon>
        <taxon>Fungi</taxon>
        <taxon>Dikarya</taxon>
        <taxon>Ascomycota</taxon>
        <taxon>Saccharomycotina</taxon>
        <taxon>Saccharomycetes</taxon>
        <taxon>Saccharomycetales</taxon>
        <taxon>Saccharomycetaceae</taxon>
        <taxon>Saccharomyces</taxon>
    </lineage>
</organism>
<feature type="chain" id="PRO_0000367891" description="Ubiquitin-related modifier 1">
    <location>
        <begin position="1"/>
        <end position="99"/>
    </location>
</feature>
<feature type="modified residue" description="1-thioglycine" evidence="1">
    <location>
        <position position="99"/>
    </location>
</feature>
<feature type="cross-link" description="Glycyl lysine isopeptide (Gly-Lys) (interchain with K-? in acceptor proteins)" evidence="1">
    <location>
        <position position="99"/>
    </location>
</feature>
<dbReference type="EMBL" id="CH408055">
    <property type="protein sequence ID" value="EDV09498.1"/>
    <property type="molecule type" value="Genomic_DNA"/>
</dbReference>
<dbReference type="BMRB" id="B3LTL7"/>
<dbReference type="SMR" id="B3LTL7"/>
<dbReference type="HOGENOM" id="CLU_148208_0_0_1"/>
<dbReference type="OrthoDB" id="15846at4893"/>
<dbReference type="UniPathway" id="UPA00988"/>
<dbReference type="Proteomes" id="UP000008335">
    <property type="component" value="Unassembled WGS sequence"/>
</dbReference>
<dbReference type="GO" id="GO:0005829">
    <property type="term" value="C:cytosol"/>
    <property type="evidence" value="ECO:0007669"/>
    <property type="project" value="UniProtKB-UniRule"/>
</dbReference>
<dbReference type="GO" id="GO:0005634">
    <property type="term" value="C:nucleus"/>
    <property type="evidence" value="ECO:0007669"/>
    <property type="project" value="UniProtKB-SubCell"/>
</dbReference>
<dbReference type="GO" id="GO:0032447">
    <property type="term" value="P:protein urmylation"/>
    <property type="evidence" value="ECO:0007669"/>
    <property type="project" value="UniProtKB-UniRule"/>
</dbReference>
<dbReference type="GO" id="GO:0034227">
    <property type="term" value="P:tRNA thio-modification"/>
    <property type="evidence" value="ECO:0007669"/>
    <property type="project" value="UniProtKB-UniRule"/>
</dbReference>
<dbReference type="GO" id="GO:0002098">
    <property type="term" value="P:tRNA wobble uridine modification"/>
    <property type="evidence" value="ECO:0007669"/>
    <property type="project" value="UniProtKB-UniRule"/>
</dbReference>
<dbReference type="CDD" id="cd01764">
    <property type="entry name" value="Ubl_Urm1"/>
    <property type="match status" value="1"/>
</dbReference>
<dbReference type="FunFam" id="3.10.20.30:FF:000052">
    <property type="entry name" value="Ubiquitin-related modifier 1"/>
    <property type="match status" value="1"/>
</dbReference>
<dbReference type="Gene3D" id="3.10.20.30">
    <property type="match status" value="1"/>
</dbReference>
<dbReference type="HAMAP" id="MF_03048">
    <property type="entry name" value="Urm1"/>
    <property type="match status" value="1"/>
</dbReference>
<dbReference type="InterPro" id="IPR012675">
    <property type="entry name" value="Beta-grasp_dom_sf"/>
</dbReference>
<dbReference type="InterPro" id="IPR016155">
    <property type="entry name" value="Mopterin_synth/thiamin_S_b"/>
</dbReference>
<dbReference type="InterPro" id="IPR015221">
    <property type="entry name" value="Urm1"/>
</dbReference>
<dbReference type="PANTHER" id="PTHR14986">
    <property type="entry name" value="RURM1 PROTEIN"/>
    <property type="match status" value="1"/>
</dbReference>
<dbReference type="Pfam" id="PF09138">
    <property type="entry name" value="Urm1"/>
    <property type="match status" value="1"/>
</dbReference>
<dbReference type="PIRSF" id="PIRSF037379">
    <property type="entry name" value="Ubiquitin-related_modifier_1"/>
    <property type="match status" value="1"/>
</dbReference>
<dbReference type="SUPFAM" id="SSF54285">
    <property type="entry name" value="MoaD/ThiS"/>
    <property type="match status" value="1"/>
</dbReference>
<gene>
    <name evidence="1" type="primary">URM1</name>
    <name type="ORF">SCRG_05187</name>
</gene>